<reference key="1">
    <citation type="journal article" date="2008" name="PLoS Genet.">
        <title>Complete genome sequence of the N2-fixing broad host range endophyte Klebsiella pneumoniae 342 and virulence predictions verified in mice.</title>
        <authorList>
            <person name="Fouts D.E."/>
            <person name="Tyler H.L."/>
            <person name="DeBoy R.T."/>
            <person name="Daugherty S."/>
            <person name="Ren Q."/>
            <person name="Badger J.H."/>
            <person name="Durkin A.S."/>
            <person name="Huot H."/>
            <person name="Shrivastava S."/>
            <person name="Kothari S."/>
            <person name="Dodson R.J."/>
            <person name="Mohamoud Y."/>
            <person name="Khouri H."/>
            <person name="Roesch L.F.W."/>
            <person name="Krogfelt K.A."/>
            <person name="Struve C."/>
            <person name="Triplett E.W."/>
            <person name="Methe B.A."/>
        </authorList>
    </citation>
    <scope>NUCLEOTIDE SEQUENCE [LARGE SCALE GENOMIC DNA]</scope>
    <source>
        <strain>342</strain>
    </source>
</reference>
<organism>
    <name type="scientific">Klebsiella pneumoniae (strain 342)</name>
    <dbReference type="NCBI Taxonomy" id="507522"/>
    <lineage>
        <taxon>Bacteria</taxon>
        <taxon>Pseudomonadati</taxon>
        <taxon>Pseudomonadota</taxon>
        <taxon>Gammaproteobacteria</taxon>
        <taxon>Enterobacterales</taxon>
        <taxon>Enterobacteriaceae</taxon>
        <taxon>Klebsiella/Raoultella group</taxon>
        <taxon>Klebsiella</taxon>
        <taxon>Klebsiella pneumoniae complex</taxon>
    </lineage>
</organism>
<comment type="function">
    <text evidence="1">Specifically methylates the N4 position of cytidine in position 1402 (C1402) of 16S rRNA.</text>
</comment>
<comment type="catalytic activity">
    <reaction evidence="1">
        <text>cytidine(1402) in 16S rRNA + S-adenosyl-L-methionine = N(4)-methylcytidine(1402) in 16S rRNA + S-adenosyl-L-homocysteine + H(+)</text>
        <dbReference type="Rhea" id="RHEA:42928"/>
        <dbReference type="Rhea" id="RHEA-COMP:10286"/>
        <dbReference type="Rhea" id="RHEA-COMP:10287"/>
        <dbReference type="ChEBI" id="CHEBI:15378"/>
        <dbReference type="ChEBI" id="CHEBI:57856"/>
        <dbReference type="ChEBI" id="CHEBI:59789"/>
        <dbReference type="ChEBI" id="CHEBI:74506"/>
        <dbReference type="ChEBI" id="CHEBI:82748"/>
        <dbReference type="EC" id="2.1.1.199"/>
    </reaction>
</comment>
<comment type="subcellular location">
    <subcellularLocation>
        <location evidence="1">Cytoplasm</location>
    </subcellularLocation>
</comment>
<comment type="similarity">
    <text evidence="1">Belongs to the methyltransferase superfamily. RsmH family.</text>
</comment>
<keyword id="KW-0963">Cytoplasm</keyword>
<keyword id="KW-0489">Methyltransferase</keyword>
<keyword id="KW-0698">rRNA processing</keyword>
<keyword id="KW-0949">S-adenosyl-L-methionine</keyword>
<keyword id="KW-0808">Transferase</keyword>
<name>RSMH_KLEP3</name>
<protein>
    <recommendedName>
        <fullName evidence="1">Ribosomal RNA small subunit methyltransferase H</fullName>
        <ecNumber evidence="1">2.1.1.199</ecNumber>
    </recommendedName>
    <alternativeName>
        <fullName evidence="1">16S rRNA m(4)C1402 methyltransferase</fullName>
    </alternativeName>
    <alternativeName>
        <fullName evidence="1">rRNA (cytosine-N(4)-)-methyltransferase RsmH</fullName>
    </alternativeName>
</protein>
<feature type="chain" id="PRO_0000386935" description="Ribosomal RNA small subunit methyltransferase H">
    <location>
        <begin position="1"/>
        <end position="313"/>
    </location>
</feature>
<feature type="binding site" evidence="1">
    <location>
        <begin position="35"/>
        <end position="37"/>
    </location>
    <ligand>
        <name>S-adenosyl-L-methionine</name>
        <dbReference type="ChEBI" id="CHEBI:59789"/>
    </ligand>
</feature>
<feature type="binding site" evidence="1">
    <location>
        <position position="55"/>
    </location>
    <ligand>
        <name>S-adenosyl-L-methionine</name>
        <dbReference type="ChEBI" id="CHEBI:59789"/>
    </ligand>
</feature>
<feature type="binding site" evidence="1">
    <location>
        <position position="79"/>
    </location>
    <ligand>
        <name>S-adenosyl-L-methionine</name>
        <dbReference type="ChEBI" id="CHEBI:59789"/>
    </ligand>
</feature>
<feature type="binding site" evidence="1">
    <location>
        <position position="101"/>
    </location>
    <ligand>
        <name>S-adenosyl-L-methionine</name>
        <dbReference type="ChEBI" id="CHEBI:59789"/>
    </ligand>
</feature>
<feature type="binding site" evidence="1">
    <location>
        <position position="108"/>
    </location>
    <ligand>
        <name>S-adenosyl-L-methionine</name>
        <dbReference type="ChEBI" id="CHEBI:59789"/>
    </ligand>
</feature>
<gene>
    <name evidence="1" type="primary">rsmH</name>
    <name type="synonym">mraW</name>
    <name type="ordered locus">KPK_4655</name>
</gene>
<evidence type="ECO:0000255" key="1">
    <source>
        <dbReference type="HAMAP-Rule" id="MF_01007"/>
    </source>
</evidence>
<accession>B5Y1V5</accession>
<dbReference type="EC" id="2.1.1.199" evidence="1"/>
<dbReference type="EMBL" id="CP000964">
    <property type="protein sequence ID" value="ACI11533.1"/>
    <property type="molecule type" value="Genomic_DNA"/>
</dbReference>
<dbReference type="SMR" id="B5Y1V5"/>
<dbReference type="KEGG" id="kpe:KPK_4655"/>
<dbReference type="HOGENOM" id="CLU_038422_2_0_6"/>
<dbReference type="Proteomes" id="UP000001734">
    <property type="component" value="Chromosome"/>
</dbReference>
<dbReference type="GO" id="GO:0005737">
    <property type="term" value="C:cytoplasm"/>
    <property type="evidence" value="ECO:0007669"/>
    <property type="project" value="UniProtKB-SubCell"/>
</dbReference>
<dbReference type="GO" id="GO:0071424">
    <property type="term" value="F:rRNA (cytosine-N4-)-methyltransferase activity"/>
    <property type="evidence" value="ECO:0007669"/>
    <property type="project" value="UniProtKB-UniRule"/>
</dbReference>
<dbReference type="GO" id="GO:0070475">
    <property type="term" value="P:rRNA base methylation"/>
    <property type="evidence" value="ECO:0007669"/>
    <property type="project" value="UniProtKB-UniRule"/>
</dbReference>
<dbReference type="FunFam" id="1.10.150.170:FF:000001">
    <property type="entry name" value="Ribosomal RNA small subunit methyltransferase H"/>
    <property type="match status" value="1"/>
</dbReference>
<dbReference type="Gene3D" id="1.10.150.170">
    <property type="entry name" value="Putative methyltransferase TM0872, insert domain"/>
    <property type="match status" value="1"/>
</dbReference>
<dbReference type="Gene3D" id="3.40.50.150">
    <property type="entry name" value="Vaccinia Virus protein VP39"/>
    <property type="match status" value="1"/>
</dbReference>
<dbReference type="HAMAP" id="MF_01007">
    <property type="entry name" value="16SrRNA_methyltr_H"/>
    <property type="match status" value="1"/>
</dbReference>
<dbReference type="InterPro" id="IPR002903">
    <property type="entry name" value="RsmH"/>
</dbReference>
<dbReference type="InterPro" id="IPR023397">
    <property type="entry name" value="SAM-dep_MeTrfase_MraW_recog"/>
</dbReference>
<dbReference type="InterPro" id="IPR029063">
    <property type="entry name" value="SAM-dependent_MTases_sf"/>
</dbReference>
<dbReference type="NCBIfam" id="TIGR00006">
    <property type="entry name" value="16S rRNA (cytosine(1402)-N(4))-methyltransferase RsmH"/>
    <property type="match status" value="1"/>
</dbReference>
<dbReference type="PANTHER" id="PTHR11265:SF0">
    <property type="entry name" value="12S RRNA N4-METHYLCYTIDINE METHYLTRANSFERASE"/>
    <property type="match status" value="1"/>
</dbReference>
<dbReference type="PANTHER" id="PTHR11265">
    <property type="entry name" value="S-ADENOSYL-METHYLTRANSFERASE MRAW"/>
    <property type="match status" value="1"/>
</dbReference>
<dbReference type="Pfam" id="PF01795">
    <property type="entry name" value="Methyltransf_5"/>
    <property type="match status" value="1"/>
</dbReference>
<dbReference type="PIRSF" id="PIRSF004486">
    <property type="entry name" value="MraW"/>
    <property type="match status" value="1"/>
</dbReference>
<dbReference type="SUPFAM" id="SSF81799">
    <property type="entry name" value="Putative methyltransferase TM0872, insert domain"/>
    <property type="match status" value="1"/>
</dbReference>
<dbReference type="SUPFAM" id="SSF53335">
    <property type="entry name" value="S-adenosyl-L-methionine-dependent methyltransferases"/>
    <property type="match status" value="1"/>
</dbReference>
<sequence length="313" mass="34841">MMENYKHTTVLLDEAVNGLNIRPDGIYIDGTFGRGGHSRLILSRLGAEGRLLAIDRDPQAIAVAKTIDDPRFSIVHGPFSQLADYVDERNLTGKIDGILLDLGVSSPQLDDAERGFSFMRDGPLDMRMDPTRGQSAAEWLQTAEEADIAWVIKTFGEERFGKRIARAIVERNRIEPMTRTKELAEVIAAAMPVKDKHKHPATRTFQAVRIWVNSELEEIEQALKSSLSVLAPGGRLSIISFHSLEDRIVKRFMREQSRGPQVPAGIPMTEAQLKKLGGRELRALGKLMPGEEEVAENPRARSSVLRIAERTNA</sequence>
<proteinExistence type="inferred from homology"/>